<geneLocation type="mitochondrion"/>
<reference key="1">
    <citation type="journal article" date="2002" name="Mol. Phylogenet. Evol.">
        <title>Molecular phylogenetics of emydine turtles: taxonomic revision and the evolution of shell kinesis.</title>
        <authorList>
            <person name="Feldman C.R."/>
            <person name="Parham J.F."/>
        </authorList>
    </citation>
    <scope>NUCLEOTIDE SEQUENCE [GENOMIC DNA]</scope>
    <source>
        <strain>Isolate MVZ 137743</strain>
    </source>
</reference>
<proteinExistence type="inferred from homology"/>
<organism>
    <name type="scientific">Terrapene ornata</name>
    <name type="common">Ornate box turtle</name>
    <dbReference type="NCBI Taxonomy" id="85611"/>
    <lineage>
        <taxon>Eukaryota</taxon>
        <taxon>Metazoa</taxon>
        <taxon>Chordata</taxon>
        <taxon>Craniata</taxon>
        <taxon>Vertebrata</taxon>
        <taxon>Euteleostomi</taxon>
        <taxon>Archelosauria</taxon>
        <taxon>Testudinata</taxon>
        <taxon>Testudines</taxon>
        <taxon>Cryptodira</taxon>
        <taxon>Durocryptodira</taxon>
        <taxon>Testudinoidea</taxon>
        <taxon>Emydidae</taxon>
        <taxon>Terrapene</taxon>
    </lineage>
</organism>
<feature type="chain" id="PRO_0000061653" description="Cytochrome b">
    <location>
        <begin position="1"/>
        <end position="379"/>
    </location>
</feature>
<feature type="transmembrane region" description="Helical" evidence="2">
    <location>
        <begin position="34"/>
        <end position="54"/>
    </location>
</feature>
<feature type="transmembrane region" description="Helical" evidence="2">
    <location>
        <begin position="78"/>
        <end position="99"/>
    </location>
</feature>
<feature type="transmembrane region" description="Helical" evidence="2">
    <location>
        <begin position="114"/>
        <end position="134"/>
    </location>
</feature>
<feature type="transmembrane region" description="Helical" evidence="2">
    <location>
        <begin position="179"/>
        <end position="199"/>
    </location>
</feature>
<feature type="transmembrane region" description="Helical" evidence="2">
    <location>
        <begin position="227"/>
        <end position="247"/>
    </location>
</feature>
<feature type="transmembrane region" description="Helical" evidence="2">
    <location>
        <begin position="289"/>
        <end position="309"/>
    </location>
</feature>
<feature type="transmembrane region" description="Helical" evidence="2">
    <location>
        <begin position="321"/>
        <end position="341"/>
    </location>
</feature>
<feature type="transmembrane region" description="Helical" evidence="2">
    <location>
        <begin position="348"/>
        <end position="368"/>
    </location>
</feature>
<feature type="binding site" description="axial binding residue" evidence="2">
    <location>
        <position position="84"/>
    </location>
    <ligand>
        <name>heme b</name>
        <dbReference type="ChEBI" id="CHEBI:60344"/>
        <label>b562</label>
    </ligand>
    <ligandPart>
        <name>Fe</name>
        <dbReference type="ChEBI" id="CHEBI:18248"/>
    </ligandPart>
</feature>
<feature type="binding site" description="axial binding residue" evidence="2">
    <location>
        <position position="98"/>
    </location>
    <ligand>
        <name>heme b</name>
        <dbReference type="ChEBI" id="CHEBI:60344"/>
        <label>b566</label>
    </ligand>
    <ligandPart>
        <name>Fe</name>
        <dbReference type="ChEBI" id="CHEBI:18248"/>
    </ligandPart>
</feature>
<feature type="binding site" description="axial binding residue" evidence="2">
    <location>
        <position position="183"/>
    </location>
    <ligand>
        <name>heme b</name>
        <dbReference type="ChEBI" id="CHEBI:60344"/>
        <label>b562</label>
    </ligand>
    <ligandPart>
        <name>Fe</name>
        <dbReference type="ChEBI" id="CHEBI:18248"/>
    </ligandPart>
</feature>
<feature type="binding site" description="axial binding residue" evidence="2">
    <location>
        <position position="197"/>
    </location>
    <ligand>
        <name>heme b</name>
        <dbReference type="ChEBI" id="CHEBI:60344"/>
        <label>b566</label>
    </ligand>
    <ligandPart>
        <name>Fe</name>
        <dbReference type="ChEBI" id="CHEBI:18248"/>
    </ligandPart>
</feature>
<feature type="binding site" evidence="2">
    <location>
        <position position="202"/>
    </location>
    <ligand>
        <name>a ubiquinone</name>
        <dbReference type="ChEBI" id="CHEBI:16389"/>
    </ligand>
</feature>
<evidence type="ECO:0000250" key="1"/>
<evidence type="ECO:0000250" key="2">
    <source>
        <dbReference type="UniProtKB" id="P00157"/>
    </source>
</evidence>
<evidence type="ECO:0000255" key="3">
    <source>
        <dbReference type="PROSITE-ProRule" id="PRU00967"/>
    </source>
</evidence>
<evidence type="ECO:0000255" key="4">
    <source>
        <dbReference type="PROSITE-ProRule" id="PRU00968"/>
    </source>
</evidence>
<name>CYB_TEROR</name>
<comment type="function">
    <text evidence="2">Component of the ubiquinol-cytochrome c reductase complex (complex III or cytochrome b-c1 complex) that is part of the mitochondrial respiratory chain. The b-c1 complex mediates electron transfer from ubiquinol to cytochrome c. Contributes to the generation of a proton gradient across the mitochondrial membrane that is then used for ATP synthesis.</text>
</comment>
<comment type="cofactor">
    <cofactor evidence="2">
        <name>heme b</name>
        <dbReference type="ChEBI" id="CHEBI:60344"/>
    </cofactor>
    <text evidence="2">Binds 2 heme b groups non-covalently.</text>
</comment>
<comment type="subunit">
    <text evidence="2">The cytochrome bc1 complex contains 3 respiratory subunits (MT-CYB, CYC1 and UQCRFS1), 2 core proteins (UQCRC1 and UQCRC2) and probably 6 low-molecular weight proteins.</text>
</comment>
<comment type="subcellular location">
    <subcellularLocation>
        <location evidence="2">Mitochondrion inner membrane</location>
        <topology evidence="2">Multi-pass membrane protein</topology>
    </subcellularLocation>
</comment>
<comment type="miscellaneous">
    <text evidence="1">Heme 1 (or BL or b562) is low-potential and absorbs at about 562 nm, and heme 2 (or BH or b566) is high-potential and absorbs at about 566 nm.</text>
</comment>
<comment type="similarity">
    <text evidence="3 4">Belongs to the cytochrome b family.</text>
</comment>
<comment type="caution">
    <text evidence="2">The full-length protein contains only eight transmembrane helices, not nine as predicted by bioinformatics tools.</text>
</comment>
<keyword id="KW-0249">Electron transport</keyword>
<keyword id="KW-0349">Heme</keyword>
<keyword id="KW-0408">Iron</keyword>
<keyword id="KW-0472">Membrane</keyword>
<keyword id="KW-0479">Metal-binding</keyword>
<keyword id="KW-0496">Mitochondrion</keyword>
<keyword id="KW-0999">Mitochondrion inner membrane</keyword>
<keyword id="KW-0679">Respiratory chain</keyword>
<keyword id="KW-0812">Transmembrane</keyword>
<keyword id="KW-1133">Transmembrane helix</keyword>
<keyword id="KW-0813">Transport</keyword>
<keyword id="KW-0830">Ubiquinone</keyword>
<accession>Q8SJK6</accession>
<sequence length="379" mass="42536">MSTNLRKTHPLAKIINNSFIDLPSPSNISAWWNFGSLLGTCLILQTITGIFLAMHYSPDISLAFSSVAHITRDVQYGWLIRNMHANGASLFFMCIYLHIGRGIYYGSYLYKETWNTGTTLLLLTMATAFVGYVLPWGQMSFWGATVITNLLSAIPYIGNTLVQWIWGGFSVDNATLTRFFTFHFLLPFTIMGLSMMHLLFLHETGSNNPTGLNSNTDKIPFHPYFSYKDLLGLILMLALLLTLTLFSPNLLGDPDNFTPANPLSTPPHIKPEWYFLFAYAILRSIPNKLGGVLALLLSILVLFLMPALHTSKQRTTQFRPLTQILFWSLIANLLVLTWIGGQPVENPFIIIGQMASILYFSILLILMPIAGVIENKMLS</sequence>
<protein>
    <recommendedName>
        <fullName>Cytochrome b</fullName>
    </recommendedName>
    <alternativeName>
        <fullName>Complex III subunit 3</fullName>
    </alternativeName>
    <alternativeName>
        <fullName>Complex III subunit III</fullName>
    </alternativeName>
    <alternativeName>
        <fullName>Cytochrome b-c1 complex subunit 3</fullName>
    </alternativeName>
    <alternativeName>
        <fullName>Ubiquinol-cytochrome-c reductase complex cytochrome b subunit</fullName>
    </alternativeName>
</protein>
<dbReference type="EMBL" id="AF258874">
    <property type="protein sequence ID" value="AAL74310.1"/>
    <property type="molecule type" value="Genomic_DNA"/>
</dbReference>
<dbReference type="SMR" id="Q8SJK6"/>
<dbReference type="GO" id="GO:0005743">
    <property type="term" value="C:mitochondrial inner membrane"/>
    <property type="evidence" value="ECO:0007669"/>
    <property type="project" value="UniProtKB-SubCell"/>
</dbReference>
<dbReference type="GO" id="GO:0045275">
    <property type="term" value="C:respiratory chain complex III"/>
    <property type="evidence" value="ECO:0007669"/>
    <property type="project" value="InterPro"/>
</dbReference>
<dbReference type="GO" id="GO:0046872">
    <property type="term" value="F:metal ion binding"/>
    <property type="evidence" value="ECO:0007669"/>
    <property type="project" value="UniProtKB-KW"/>
</dbReference>
<dbReference type="GO" id="GO:0008121">
    <property type="term" value="F:ubiquinol-cytochrome-c reductase activity"/>
    <property type="evidence" value="ECO:0007669"/>
    <property type="project" value="InterPro"/>
</dbReference>
<dbReference type="GO" id="GO:0006122">
    <property type="term" value="P:mitochondrial electron transport, ubiquinol to cytochrome c"/>
    <property type="evidence" value="ECO:0007669"/>
    <property type="project" value="TreeGrafter"/>
</dbReference>
<dbReference type="CDD" id="cd00290">
    <property type="entry name" value="cytochrome_b_C"/>
    <property type="match status" value="1"/>
</dbReference>
<dbReference type="CDD" id="cd00284">
    <property type="entry name" value="Cytochrome_b_N"/>
    <property type="match status" value="1"/>
</dbReference>
<dbReference type="FunFam" id="1.20.810.10:FF:000002">
    <property type="entry name" value="Cytochrome b"/>
    <property type="match status" value="1"/>
</dbReference>
<dbReference type="Gene3D" id="1.20.810.10">
    <property type="entry name" value="Cytochrome Bc1 Complex, Chain C"/>
    <property type="match status" value="1"/>
</dbReference>
<dbReference type="InterPro" id="IPR005798">
    <property type="entry name" value="Cyt_b/b6_C"/>
</dbReference>
<dbReference type="InterPro" id="IPR036150">
    <property type="entry name" value="Cyt_b/b6_C_sf"/>
</dbReference>
<dbReference type="InterPro" id="IPR005797">
    <property type="entry name" value="Cyt_b/b6_N"/>
</dbReference>
<dbReference type="InterPro" id="IPR027387">
    <property type="entry name" value="Cytb/b6-like_sf"/>
</dbReference>
<dbReference type="InterPro" id="IPR030689">
    <property type="entry name" value="Cytochrome_b"/>
</dbReference>
<dbReference type="InterPro" id="IPR048260">
    <property type="entry name" value="Cytochrome_b_C_euk/bac"/>
</dbReference>
<dbReference type="InterPro" id="IPR048259">
    <property type="entry name" value="Cytochrome_b_N_euk/bac"/>
</dbReference>
<dbReference type="InterPro" id="IPR016174">
    <property type="entry name" value="Di-haem_cyt_TM"/>
</dbReference>
<dbReference type="PANTHER" id="PTHR19271">
    <property type="entry name" value="CYTOCHROME B"/>
    <property type="match status" value="1"/>
</dbReference>
<dbReference type="PANTHER" id="PTHR19271:SF16">
    <property type="entry name" value="CYTOCHROME B"/>
    <property type="match status" value="1"/>
</dbReference>
<dbReference type="Pfam" id="PF00032">
    <property type="entry name" value="Cytochrom_B_C"/>
    <property type="match status" value="1"/>
</dbReference>
<dbReference type="Pfam" id="PF00033">
    <property type="entry name" value="Cytochrome_B"/>
    <property type="match status" value="1"/>
</dbReference>
<dbReference type="PIRSF" id="PIRSF038885">
    <property type="entry name" value="COB"/>
    <property type="match status" value="1"/>
</dbReference>
<dbReference type="SUPFAM" id="SSF81648">
    <property type="entry name" value="a domain/subunit of cytochrome bc1 complex (Ubiquinol-cytochrome c reductase)"/>
    <property type="match status" value="1"/>
</dbReference>
<dbReference type="SUPFAM" id="SSF81342">
    <property type="entry name" value="Transmembrane di-heme cytochromes"/>
    <property type="match status" value="1"/>
</dbReference>
<dbReference type="PROSITE" id="PS51003">
    <property type="entry name" value="CYTB_CTER"/>
    <property type="match status" value="1"/>
</dbReference>
<dbReference type="PROSITE" id="PS51002">
    <property type="entry name" value="CYTB_NTER"/>
    <property type="match status" value="1"/>
</dbReference>
<gene>
    <name type="primary">MT-CYB</name>
    <name type="synonym">COB</name>
    <name type="synonym">CYTB</name>
    <name type="synonym">MTCYB</name>
</gene>